<dbReference type="EMBL" id="AP000372">
    <property type="protein sequence ID" value="BAA98193.1"/>
    <property type="status" value="ALT_SEQ"/>
    <property type="molecule type" value="Genomic_DNA"/>
</dbReference>
<dbReference type="EMBL" id="CP002688">
    <property type="protein sequence ID" value="AED95658.1"/>
    <property type="molecule type" value="Genomic_DNA"/>
</dbReference>
<dbReference type="EMBL" id="AK118458">
    <property type="protein sequence ID" value="BAC43066.1"/>
    <property type="molecule type" value="mRNA"/>
</dbReference>
<dbReference type="RefSeq" id="NP_199647.2">
    <property type="nucleotide sequence ID" value="NM_124211.3"/>
</dbReference>
<dbReference type="SMR" id="Q8GX37"/>
<dbReference type="BioGRID" id="20135">
    <property type="interactions" value="6"/>
</dbReference>
<dbReference type="FunCoup" id="Q8GX37">
    <property type="interactions" value="1"/>
</dbReference>
<dbReference type="IntAct" id="Q8GX37">
    <property type="interactions" value="6"/>
</dbReference>
<dbReference type="STRING" id="3702.Q8GX37"/>
<dbReference type="GlyGen" id="Q8GX37">
    <property type="glycosylation" value="1 site"/>
</dbReference>
<dbReference type="iPTMnet" id="Q8GX37"/>
<dbReference type="PaxDb" id="3702-AT5G48360.1"/>
<dbReference type="ProteomicsDB" id="230419"/>
<dbReference type="EnsemblPlants" id="AT5G48360.1">
    <property type="protein sequence ID" value="AT5G48360.1"/>
    <property type="gene ID" value="AT5G48360"/>
</dbReference>
<dbReference type="GeneID" id="834889"/>
<dbReference type="Gramene" id="AT5G48360.1">
    <property type="protein sequence ID" value="AT5G48360.1"/>
    <property type="gene ID" value="AT5G48360"/>
</dbReference>
<dbReference type="KEGG" id="ath:AT5G48360"/>
<dbReference type="Araport" id="AT5G48360"/>
<dbReference type="TAIR" id="AT5G48360">
    <property type="gene designation" value="FH9"/>
</dbReference>
<dbReference type="eggNOG" id="KOG1922">
    <property type="taxonomic scope" value="Eukaryota"/>
</dbReference>
<dbReference type="HOGENOM" id="CLU_007699_0_0_1"/>
<dbReference type="InParanoid" id="Q8GX37"/>
<dbReference type="OMA" id="LRMFSFW"/>
<dbReference type="OrthoDB" id="1668162at2759"/>
<dbReference type="PhylomeDB" id="Q8GX37"/>
<dbReference type="PRO" id="PR:Q8GX37"/>
<dbReference type="Proteomes" id="UP000006548">
    <property type="component" value="Chromosome 5"/>
</dbReference>
<dbReference type="ExpressionAtlas" id="Q8GX37">
    <property type="expression patterns" value="baseline and differential"/>
</dbReference>
<dbReference type="GO" id="GO:0016020">
    <property type="term" value="C:membrane"/>
    <property type="evidence" value="ECO:0007669"/>
    <property type="project" value="UniProtKB-SubCell"/>
</dbReference>
<dbReference type="GO" id="GO:0003779">
    <property type="term" value="F:actin binding"/>
    <property type="evidence" value="ECO:0000250"/>
    <property type="project" value="TAIR"/>
</dbReference>
<dbReference type="GO" id="GO:0051015">
    <property type="term" value="F:actin filament binding"/>
    <property type="evidence" value="ECO:0007669"/>
    <property type="project" value="InterPro"/>
</dbReference>
<dbReference type="GO" id="GO:0045010">
    <property type="term" value="P:actin nucleation"/>
    <property type="evidence" value="ECO:0007669"/>
    <property type="project" value="InterPro"/>
</dbReference>
<dbReference type="Gene3D" id="1.20.58.2220">
    <property type="entry name" value="Formin, FH2 domain"/>
    <property type="match status" value="1"/>
</dbReference>
<dbReference type="InterPro" id="IPR015425">
    <property type="entry name" value="FH2_Formin"/>
</dbReference>
<dbReference type="InterPro" id="IPR042201">
    <property type="entry name" value="FH2_Formin_sf"/>
</dbReference>
<dbReference type="InterPro" id="IPR027643">
    <property type="entry name" value="Formin-like_plant"/>
</dbReference>
<dbReference type="PANTHER" id="PTHR23213:SF352">
    <property type="entry name" value="FORMIN-LIKE PROTEIN 9"/>
    <property type="match status" value="1"/>
</dbReference>
<dbReference type="PANTHER" id="PTHR23213">
    <property type="entry name" value="FORMIN-RELATED"/>
    <property type="match status" value="1"/>
</dbReference>
<dbReference type="Pfam" id="PF02181">
    <property type="entry name" value="FH2"/>
    <property type="match status" value="1"/>
</dbReference>
<dbReference type="SMART" id="SM00498">
    <property type="entry name" value="FH2"/>
    <property type="match status" value="1"/>
</dbReference>
<dbReference type="SUPFAM" id="SSF101447">
    <property type="entry name" value="Formin homology 2 domain (FH2 domain)"/>
    <property type="match status" value="1"/>
</dbReference>
<dbReference type="PROSITE" id="PS51444">
    <property type="entry name" value="FH2"/>
    <property type="match status" value="1"/>
</dbReference>
<reference key="1">
    <citation type="submission" date="1999-07" db="EMBL/GenBank/DDBJ databases">
        <title>Structural analysis of Arabidopsis thaliana chromosome 5. XI.</title>
        <authorList>
            <person name="Kaneko T."/>
            <person name="Katoh T."/>
            <person name="Asamizu E."/>
            <person name="Sato S."/>
            <person name="Nakamura Y."/>
            <person name="Kotani H."/>
            <person name="Tabata S."/>
        </authorList>
    </citation>
    <scope>NUCLEOTIDE SEQUENCE [LARGE SCALE GENOMIC DNA]</scope>
    <source>
        <strain>cv. Columbia</strain>
    </source>
</reference>
<reference key="2">
    <citation type="journal article" date="2017" name="Plant J.">
        <title>Araport11: a complete reannotation of the Arabidopsis thaliana reference genome.</title>
        <authorList>
            <person name="Cheng C.Y."/>
            <person name="Krishnakumar V."/>
            <person name="Chan A.P."/>
            <person name="Thibaud-Nissen F."/>
            <person name="Schobel S."/>
            <person name="Town C.D."/>
        </authorList>
    </citation>
    <scope>GENOME REANNOTATION</scope>
    <source>
        <strain>cv. Columbia</strain>
    </source>
</reference>
<reference key="3">
    <citation type="journal article" date="2002" name="Science">
        <title>Functional annotation of a full-length Arabidopsis cDNA collection.</title>
        <authorList>
            <person name="Seki M."/>
            <person name="Narusaka M."/>
            <person name="Kamiya A."/>
            <person name="Ishida J."/>
            <person name="Satou M."/>
            <person name="Sakurai T."/>
            <person name="Nakajima M."/>
            <person name="Enju A."/>
            <person name="Akiyama K."/>
            <person name="Oono Y."/>
            <person name="Muramatsu M."/>
            <person name="Hayashizaki Y."/>
            <person name="Kawai J."/>
            <person name="Carninci P."/>
            <person name="Itoh M."/>
            <person name="Ishii Y."/>
            <person name="Arakawa T."/>
            <person name="Shibata K."/>
            <person name="Shinagawa A."/>
            <person name="Shinozaki K."/>
        </authorList>
    </citation>
    <scope>NUCLEOTIDE SEQUENCE [LARGE SCALE MRNA]</scope>
    <source>
        <strain>cv. Columbia</strain>
    </source>
</reference>
<reference key="4">
    <citation type="journal article" date="2002" name="Trends Plant Sci.">
        <title>Formins: intermediates in signal-transduction cascades that affect cytoskeletal reorganization.</title>
        <authorList>
            <person name="Deeks M.J."/>
            <person name="Hussey P.J."/>
            <person name="Davies B."/>
        </authorList>
    </citation>
    <scope>GENE FAMILY ORGANIZATION</scope>
    <scope>NOMENCLATURE</scope>
</reference>
<reference key="5">
    <citation type="journal article" date="2004" name="BMC Genomics">
        <title>Formin homology 2 domains occur in multiple contexts in angiosperms.</title>
        <authorList>
            <person name="Cvrckova F."/>
            <person name="Novotny M."/>
            <person name="Pickova D."/>
            <person name="Zarsky V."/>
        </authorList>
    </citation>
    <scope>GENE FAMILY ORGANIZATION</scope>
    <scope>NOMENCLATURE</scope>
</reference>
<name>FH9_ARATH</name>
<evidence type="ECO:0000250" key="1"/>
<evidence type="ECO:0000255" key="2"/>
<evidence type="ECO:0000255" key="3">
    <source>
        <dbReference type="PROSITE-ProRule" id="PRU00774"/>
    </source>
</evidence>
<evidence type="ECO:0000256" key="4">
    <source>
        <dbReference type="SAM" id="MobiDB-lite"/>
    </source>
</evidence>
<evidence type="ECO:0000305" key="5"/>
<keyword id="KW-0472">Membrane</keyword>
<keyword id="KW-1185">Reference proteome</keyword>
<keyword id="KW-0732">Signal</keyword>
<keyword id="KW-0812">Transmembrane</keyword>
<keyword id="KW-1133">Transmembrane helix</keyword>
<accession>Q8GX37</accession>
<accession>Q9LK78</accession>
<sequence>MQNFWFAIFFFLLTCAPPSPLSYASTVTLSRRLLYDYESPLPLPLSPISPPFFPLESSPPSPPPPLPPTPPTTFAVFPTFPANISALVLPRSSKPHHTSPTLLLPALSAVLVIATVIGLALFLYGRHRGQTRHLKNSHCSSSNTSSYGDEQSHITTNFNMAATTSPSEVFYLNTEESDHIRTGGTFFLKQDSPEIRPLPPLPPRSFHHNNYETEVNEEDEEEEEDVFFSPMASLPGSANSSPSHSCSSSCSGWVSPARSFSITMSPPNPRYSDATNLQSPSPERLRVRKNYNGNGSSSLRMFSFWNQNMGFGFPRISSASTSPDRGFIRTPLSSLYSSVSTSPDGLFRKFLDSSPPIWNDFSRNVKSVLLSHTASSRRDFVINIGESSSQQSKVPALPPPTRPPPLVPPSQPFVVQNDVKKQSFSDQPPKQLHWERLRSSSSKLSKEMVETMFIANSSNPRDLPIQNQVLDPRKAQNIATLLQLLNLSTKDVCQALLDGDCDVLGAELLECLSRLAPSKEEERKLKSFSDGSEIGPAERFLKELLHVPFVFKRVDALLFVANFHSEIKRLRKSFSVVQVACEELRNSRMFSILLEAILKTGNMMSVRTNRCGDADAFKLDTLLKLVDVKGLDGRSSLLHFVVQEMMKSEGSVRALEGIRNLNTELSNVKKSADIEYGVLRSNVSRICQGLKNIEALLLLSEESGSYGDQWLKFKERMTRFLKTAAEEIVKIKIRESSTLSALEEVTEQFHGDASKEGHTMRIFMIVRDFLSVLDQVCKEMGD</sequence>
<organism>
    <name type="scientific">Arabidopsis thaliana</name>
    <name type="common">Mouse-ear cress</name>
    <dbReference type="NCBI Taxonomy" id="3702"/>
    <lineage>
        <taxon>Eukaryota</taxon>
        <taxon>Viridiplantae</taxon>
        <taxon>Streptophyta</taxon>
        <taxon>Embryophyta</taxon>
        <taxon>Tracheophyta</taxon>
        <taxon>Spermatophyta</taxon>
        <taxon>Magnoliopsida</taxon>
        <taxon>eudicotyledons</taxon>
        <taxon>Gunneridae</taxon>
        <taxon>Pentapetalae</taxon>
        <taxon>rosids</taxon>
        <taxon>malvids</taxon>
        <taxon>Brassicales</taxon>
        <taxon>Brassicaceae</taxon>
        <taxon>Camelineae</taxon>
        <taxon>Arabidopsis</taxon>
    </lineage>
</organism>
<comment type="function">
    <text evidence="1">Might be involved in the organization and polarity of the actin cytoskeleton.</text>
</comment>
<comment type="subcellular location">
    <subcellularLocation>
        <location evidence="5">Membrane</location>
        <topology evidence="5">Single-pass membrane protein</topology>
    </subcellularLocation>
</comment>
<comment type="similarity">
    <text evidence="5">Belongs to the formin-like family. Class-I subfamily.</text>
</comment>
<comment type="sequence caution" evidence="5">
    <conflict type="erroneous gene model prediction">
        <sequence resource="EMBL-CDS" id="BAA98193"/>
    </conflict>
</comment>
<proteinExistence type="evidence at transcript level"/>
<feature type="signal peptide" evidence="2">
    <location>
        <begin position="1"/>
        <end position="24"/>
    </location>
</feature>
<feature type="chain" id="PRO_0000308534" description="Formin-like protein 9">
    <location>
        <begin position="25"/>
        <end position="782"/>
    </location>
</feature>
<feature type="transmembrane region" description="Helical" evidence="2">
    <location>
        <begin position="102"/>
        <end position="122"/>
    </location>
</feature>
<feature type="domain" description="FH2" evidence="3">
    <location>
        <begin position="406"/>
        <end position="782"/>
    </location>
</feature>
<feature type="region of interest" description="Disordered" evidence="4">
    <location>
        <begin position="191"/>
        <end position="223"/>
    </location>
</feature>
<feature type="region of interest" description="Disordered" evidence="4">
    <location>
        <begin position="264"/>
        <end position="287"/>
    </location>
</feature>
<feature type="region of interest" description="Disordered" evidence="4">
    <location>
        <begin position="387"/>
        <end position="407"/>
    </location>
</feature>
<feature type="compositionally biased region" description="Acidic residues" evidence="4">
    <location>
        <begin position="214"/>
        <end position="223"/>
    </location>
</feature>
<feature type="compositionally biased region" description="Pro residues" evidence="4">
    <location>
        <begin position="396"/>
        <end position="407"/>
    </location>
</feature>
<feature type="sequence conflict" description="In Ref. 3; BAC43066." evidence="5" ref="3">
    <original>A</original>
    <variation>V</variation>
    <location>
        <position position="232"/>
    </location>
</feature>
<protein>
    <recommendedName>
        <fullName>Formin-like protein 9</fullName>
        <shortName>AtFH9</shortName>
    </recommendedName>
</protein>
<gene>
    <name type="primary">FH9</name>
    <name type="ordered locus">At5g48360</name>
    <name type="ORF">K23F3_8</name>
</gene>